<dbReference type="EMBL" id="LT708304">
    <property type="protein sequence ID" value="SIT99504.1"/>
    <property type="molecule type" value="Genomic_DNA"/>
</dbReference>
<dbReference type="RefSeq" id="NP_854563.1">
    <property type="nucleotide sequence ID" value="NC_002945.3"/>
</dbReference>
<dbReference type="RefSeq" id="WP_003404614.1">
    <property type="nucleotide sequence ID" value="NC_002945.4"/>
</dbReference>
<dbReference type="SMR" id="P64738"/>
<dbReference type="KEGG" id="mbo:BQ2027_MB0906"/>
<dbReference type="PATRIC" id="fig|233413.5.peg.986"/>
<dbReference type="Proteomes" id="UP000001419">
    <property type="component" value="Chromosome"/>
</dbReference>
<dbReference type="GO" id="GO:0005886">
    <property type="term" value="C:plasma membrane"/>
    <property type="evidence" value="ECO:0007669"/>
    <property type="project" value="UniProtKB-SubCell"/>
</dbReference>
<dbReference type="InterPro" id="IPR024244">
    <property type="entry name" value="DUF2537"/>
</dbReference>
<dbReference type="Pfam" id="PF10801">
    <property type="entry name" value="DUF2537"/>
    <property type="match status" value="1"/>
</dbReference>
<protein>
    <recommendedName>
        <fullName>Uncharacterized protein Mb0906</fullName>
    </recommendedName>
</protein>
<sequence length="94" mass="9662">MNDQRDQAVPWATGLAVAGFVAAVIAVAVVVLSLGLIRVHPLLAVGLNIVAVSGLAPTLWGWRRTPVLRWFVLGAAVGVAGAWLALLALTLGDG</sequence>
<feature type="signal peptide" evidence="1">
    <location>
        <begin position="1"/>
        <end position="26"/>
    </location>
</feature>
<feature type="chain" id="PRO_0000014082" description="Uncharacterized protein Mb0906">
    <location>
        <begin position="27"/>
        <end position="94"/>
    </location>
</feature>
<feature type="transmembrane region" description="Helical" evidence="1">
    <location>
        <begin position="42"/>
        <end position="62"/>
    </location>
</feature>
<feature type="transmembrane region" description="Helical" evidence="1">
    <location>
        <begin position="71"/>
        <end position="91"/>
    </location>
</feature>
<comment type="subcellular location">
    <subcellularLocation>
        <location evidence="2">Cell membrane</location>
        <topology evidence="2">Multi-pass membrane protein</topology>
    </subcellularLocation>
</comment>
<name>Y906_MYCBO</name>
<gene>
    <name type="ordered locus">BQ2027_MB0906</name>
</gene>
<accession>P64738</accession>
<accession>A0A1R3XWR8</accession>
<accession>Q10544</accession>
<accession>X2BGF8</accession>
<organism>
    <name type="scientific">Mycobacterium bovis (strain ATCC BAA-935 / AF2122/97)</name>
    <dbReference type="NCBI Taxonomy" id="233413"/>
    <lineage>
        <taxon>Bacteria</taxon>
        <taxon>Bacillati</taxon>
        <taxon>Actinomycetota</taxon>
        <taxon>Actinomycetes</taxon>
        <taxon>Mycobacteriales</taxon>
        <taxon>Mycobacteriaceae</taxon>
        <taxon>Mycobacterium</taxon>
        <taxon>Mycobacterium tuberculosis complex</taxon>
    </lineage>
</organism>
<keyword id="KW-1003">Cell membrane</keyword>
<keyword id="KW-0472">Membrane</keyword>
<keyword id="KW-1185">Reference proteome</keyword>
<keyword id="KW-0732">Signal</keyword>
<keyword id="KW-0812">Transmembrane</keyword>
<keyword id="KW-1133">Transmembrane helix</keyword>
<proteinExistence type="inferred from homology"/>
<reference key="1">
    <citation type="journal article" date="2003" name="Proc. Natl. Acad. Sci. U.S.A.">
        <title>The complete genome sequence of Mycobacterium bovis.</title>
        <authorList>
            <person name="Garnier T."/>
            <person name="Eiglmeier K."/>
            <person name="Camus J.-C."/>
            <person name="Medina N."/>
            <person name="Mansoor H."/>
            <person name="Pryor M."/>
            <person name="Duthoy S."/>
            <person name="Grondin S."/>
            <person name="Lacroix C."/>
            <person name="Monsempe C."/>
            <person name="Simon S."/>
            <person name="Harris B."/>
            <person name="Atkin R."/>
            <person name="Doggett J."/>
            <person name="Mayes R."/>
            <person name="Keating L."/>
            <person name="Wheeler P.R."/>
            <person name="Parkhill J."/>
            <person name="Barrell B.G."/>
            <person name="Cole S.T."/>
            <person name="Gordon S.V."/>
            <person name="Hewinson R.G."/>
        </authorList>
    </citation>
    <scope>NUCLEOTIDE SEQUENCE [LARGE SCALE GENOMIC DNA]</scope>
    <source>
        <strain>ATCC BAA-935 / AF2122/97</strain>
    </source>
</reference>
<reference key="2">
    <citation type="journal article" date="2017" name="Genome Announc.">
        <title>Updated reference genome sequence and annotation of Mycobacterium bovis AF2122/97.</title>
        <authorList>
            <person name="Malone K.M."/>
            <person name="Farrell D."/>
            <person name="Stuber T.P."/>
            <person name="Schubert O.T."/>
            <person name="Aebersold R."/>
            <person name="Robbe-Austerman S."/>
            <person name="Gordon S.V."/>
        </authorList>
    </citation>
    <scope>NUCLEOTIDE SEQUENCE [LARGE SCALE GENOMIC DNA]</scope>
    <scope>GENOME REANNOTATION</scope>
    <source>
        <strain>ATCC BAA-935 / AF2122/97</strain>
    </source>
</reference>
<evidence type="ECO:0000255" key="1"/>
<evidence type="ECO:0000305" key="2"/>